<feature type="peptide" id="PRO_0000044651" description="Esculentin-2P" evidence="2">
    <location>
        <begin position="1"/>
        <end position="37"/>
    </location>
</feature>
<feature type="disulfide bond" evidence="1">
    <location>
        <begin position="31"/>
        <end position="37"/>
    </location>
</feature>
<dbReference type="SMR" id="P82846"/>
<dbReference type="GO" id="GO:0005576">
    <property type="term" value="C:extracellular region"/>
    <property type="evidence" value="ECO:0007669"/>
    <property type="project" value="UniProtKB-SubCell"/>
</dbReference>
<dbReference type="GO" id="GO:0050829">
    <property type="term" value="P:defense response to Gram-negative bacterium"/>
    <property type="evidence" value="ECO:0007669"/>
    <property type="project" value="UniProtKB-ARBA"/>
</dbReference>
<dbReference type="InterPro" id="IPR012521">
    <property type="entry name" value="Antimicrobial_frog_2"/>
</dbReference>
<dbReference type="Pfam" id="PF08023">
    <property type="entry name" value="Antimicrobial_2"/>
    <property type="match status" value="1"/>
</dbReference>
<accession>P82846</accession>
<protein>
    <recommendedName>
        <fullName evidence="3">Esculentin-2P</fullName>
    </recommendedName>
</protein>
<evidence type="ECO:0000250" key="1"/>
<evidence type="ECO:0000269" key="2">
    <source>
    </source>
</evidence>
<evidence type="ECO:0000303" key="3">
    <source>
    </source>
</evidence>
<evidence type="ECO:0000305" key="4"/>
<evidence type="ECO:0000305" key="5">
    <source>
    </source>
</evidence>
<organism>
    <name type="scientific">Lithobates pipiens</name>
    <name type="common">Northern leopard frog</name>
    <name type="synonym">Rana pipiens</name>
    <dbReference type="NCBI Taxonomy" id="8404"/>
    <lineage>
        <taxon>Eukaryota</taxon>
        <taxon>Metazoa</taxon>
        <taxon>Chordata</taxon>
        <taxon>Craniata</taxon>
        <taxon>Vertebrata</taxon>
        <taxon>Euteleostomi</taxon>
        <taxon>Amphibia</taxon>
        <taxon>Batrachia</taxon>
        <taxon>Anura</taxon>
        <taxon>Neobatrachia</taxon>
        <taxon>Ranoidea</taxon>
        <taxon>Ranidae</taxon>
        <taxon>Lithobates</taxon>
    </lineage>
</organism>
<reference key="1">
    <citation type="journal article" date="2000" name="Eur. J. Biochem.">
        <title>Peptides with antimicrobial activity from four different families isolated from the skins of the North American frogs Rana luteiventris, Rana berlandieri and Rana pipiens.</title>
        <authorList>
            <person name="Goraya J."/>
            <person name="Wang Y."/>
            <person name="Li Z."/>
            <person name="O'Flaherty M."/>
            <person name="Knoop F.C."/>
            <person name="Platz J.E."/>
            <person name="Conlon J.M."/>
        </authorList>
    </citation>
    <scope>PROTEIN SEQUENCE</scope>
    <scope>FUNCTION</scope>
    <scope>MASS SPECTROMETRY</scope>
    <scope>SUBCELLULAR LOCATION</scope>
    <source>
        <tissue>Skin secretion</tissue>
    </source>
</reference>
<keyword id="KW-0878">Amphibian defense peptide</keyword>
<keyword id="KW-0044">Antibiotic</keyword>
<keyword id="KW-0929">Antimicrobial</keyword>
<keyword id="KW-0903">Direct protein sequencing</keyword>
<keyword id="KW-1015">Disulfide bond</keyword>
<keyword id="KW-0964">Secreted</keyword>
<proteinExistence type="evidence at protein level"/>
<name>ES2P_LITPI</name>
<sequence length="37" mass="3871">GFSSIFRGVAKFASKGLGKDLARLGVNLVACKISKQC</sequence>
<comment type="function">
    <text evidence="2">Antibacterial activity against Gram-negative bacterium E.coli.</text>
</comment>
<comment type="subcellular location">
    <subcellularLocation>
        <location evidence="2">Secreted</location>
    </subcellularLocation>
</comment>
<comment type="tissue specificity">
    <text evidence="5">Expressed by the skin glands.</text>
</comment>
<comment type="mass spectrometry" mass="3868.4" method="Electrospray" evidence="2"/>
<comment type="similarity">
    <text evidence="4">Belongs to the frog skin active peptide (FSAP) family. Esculentin subfamily.</text>
</comment>
<comment type="online information" name="The antimicrobial peptide database">
    <link uri="https://wangapd3.com/database/query_output.php?ID=00663"/>
</comment>